<evidence type="ECO:0000250" key="1"/>
<evidence type="ECO:0000255" key="2"/>
<evidence type="ECO:0000305" key="3"/>
<gene>
    <name type="primary">ndhD3</name>
    <name type="ordered locus">alr5050</name>
</gene>
<feature type="chain" id="PRO_0000118034" description="NAD(P)H-quinone oxidoreductase chain 4-3">
    <location>
        <begin position="1"/>
        <end position="560"/>
    </location>
</feature>
<feature type="transmembrane region" description="Helical" evidence="2">
    <location>
        <begin position="5"/>
        <end position="25"/>
    </location>
</feature>
<feature type="transmembrane region" description="Helical" evidence="2">
    <location>
        <begin position="35"/>
        <end position="55"/>
    </location>
</feature>
<feature type="transmembrane region" description="Helical" evidence="2">
    <location>
        <begin position="86"/>
        <end position="106"/>
    </location>
</feature>
<feature type="transmembrane region" description="Helical" evidence="2">
    <location>
        <begin position="114"/>
        <end position="134"/>
    </location>
</feature>
<feature type="transmembrane region" description="Helical" evidence="2">
    <location>
        <begin position="135"/>
        <end position="155"/>
    </location>
</feature>
<feature type="transmembrane region" description="Helical" evidence="2">
    <location>
        <begin position="168"/>
        <end position="188"/>
    </location>
</feature>
<feature type="transmembrane region" description="Helical" evidence="2">
    <location>
        <begin position="208"/>
        <end position="228"/>
    </location>
</feature>
<feature type="transmembrane region" description="Helical" evidence="2">
    <location>
        <begin position="242"/>
        <end position="262"/>
    </location>
</feature>
<feature type="transmembrane region" description="Helical" evidence="2">
    <location>
        <begin position="273"/>
        <end position="293"/>
    </location>
</feature>
<feature type="transmembrane region" description="Helical" evidence="2">
    <location>
        <begin position="310"/>
        <end position="330"/>
    </location>
</feature>
<feature type="transmembrane region" description="Helical" evidence="2">
    <location>
        <begin position="331"/>
        <end position="351"/>
    </location>
</feature>
<feature type="transmembrane region" description="Helical" evidence="2">
    <location>
        <begin position="374"/>
        <end position="394"/>
    </location>
</feature>
<feature type="transmembrane region" description="Helical" evidence="2">
    <location>
        <begin position="417"/>
        <end position="437"/>
    </location>
</feature>
<feature type="transmembrane region" description="Helical" evidence="2">
    <location>
        <begin position="488"/>
        <end position="508"/>
    </location>
</feature>
<accession>Q8YM86</accession>
<dbReference type="EC" id="7.1.1.-"/>
<dbReference type="EMBL" id="BA000019">
    <property type="protein sequence ID" value="BAB76749.1"/>
    <property type="molecule type" value="Genomic_DNA"/>
</dbReference>
<dbReference type="PIR" id="AB2437">
    <property type="entry name" value="AB2437"/>
</dbReference>
<dbReference type="SMR" id="Q8YM86"/>
<dbReference type="STRING" id="103690.gene:10497108"/>
<dbReference type="KEGG" id="ana:alr5050"/>
<dbReference type="eggNOG" id="COG1008">
    <property type="taxonomic scope" value="Bacteria"/>
</dbReference>
<dbReference type="Proteomes" id="UP000002483">
    <property type="component" value="Chromosome"/>
</dbReference>
<dbReference type="GO" id="GO:0031676">
    <property type="term" value="C:plasma membrane-derived thylakoid membrane"/>
    <property type="evidence" value="ECO:0007669"/>
    <property type="project" value="UniProtKB-SubCell"/>
</dbReference>
<dbReference type="GO" id="GO:0008137">
    <property type="term" value="F:NADH dehydrogenase (ubiquinone) activity"/>
    <property type="evidence" value="ECO:0007669"/>
    <property type="project" value="InterPro"/>
</dbReference>
<dbReference type="GO" id="GO:0048039">
    <property type="term" value="F:ubiquinone binding"/>
    <property type="evidence" value="ECO:0007669"/>
    <property type="project" value="TreeGrafter"/>
</dbReference>
<dbReference type="GO" id="GO:0042773">
    <property type="term" value="P:ATP synthesis coupled electron transport"/>
    <property type="evidence" value="ECO:0007669"/>
    <property type="project" value="InterPro"/>
</dbReference>
<dbReference type="GO" id="GO:0015990">
    <property type="term" value="P:electron transport coupled proton transport"/>
    <property type="evidence" value="ECO:0007669"/>
    <property type="project" value="TreeGrafter"/>
</dbReference>
<dbReference type="HAMAP" id="MF_00491">
    <property type="entry name" value="NDH1_NuoM"/>
    <property type="match status" value="1"/>
</dbReference>
<dbReference type="InterPro" id="IPR022997">
    <property type="entry name" value="NADH_Q_OxRdtase_chain4"/>
</dbReference>
<dbReference type="InterPro" id="IPR010227">
    <property type="entry name" value="NADH_Q_OxRdtase_chainM/4"/>
</dbReference>
<dbReference type="InterPro" id="IPR003918">
    <property type="entry name" value="NADH_UbQ_OxRdtase"/>
</dbReference>
<dbReference type="InterPro" id="IPR001750">
    <property type="entry name" value="ND/Mrp_TM"/>
</dbReference>
<dbReference type="NCBIfam" id="TIGR01972">
    <property type="entry name" value="NDH_I_M"/>
    <property type="match status" value="1"/>
</dbReference>
<dbReference type="NCBIfam" id="NF009212">
    <property type="entry name" value="PRK12561.1"/>
    <property type="match status" value="1"/>
</dbReference>
<dbReference type="PANTHER" id="PTHR43507:SF21">
    <property type="entry name" value="NAD(P)H-QUINONE OXIDOREDUCTASE CHAIN 4, CHLOROPLASTIC"/>
    <property type="match status" value="1"/>
</dbReference>
<dbReference type="PANTHER" id="PTHR43507">
    <property type="entry name" value="NADH-UBIQUINONE OXIDOREDUCTASE CHAIN 4"/>
    <property type="match status" value="1"/>
</dbReference>
<dbReference type="Pfam" id="PF00361">
    <property type="entry name" value="Proton_antipo_M"/>
    <property type="match status" value="1"/>
</dbReference>
<dbReference type="PRINTS" id="PR01437">
    <property type="entry name" value="NUOXDRDTASE4"/>
</dbReference>
<keyword id="KW-0472">Membrane</keyword>
<keyword id="KW-0520">NAD</keyword>
<keyword id="KW-0521">NADP</keyword>
<keyword id="KW-0618">Plastoquinone</keyword>
<keyword id="KW-0874">Quinone</keyword>
<keyword id="KW-1185">Reference proteome</keyword>
<keyword id="KW-0793">Thylakoid</keyword>
<keyword id="KW-1278">Translocase</keyword>
<keyword id="KW-0812">Transmembrane</keyword>
<keyword id="KW-1133">Transmembrane helix</keyword>
<reference key="1">
    <citation type="journal article" date="2001" name="DNA Res.">
        <title>Complete genomic sequence of the filamentous nitrogen-fixing cyanobacterium Anabaena sp. strain PCC 7120.</title>
        <authorList>
            <person name="Kaneko T."/>
            <person name="Nakamura Y."/>
            <person name="Wolk C.P."/>
            <person name="Kuritz T."/>
            <person name="Sasamoto S."/>
            <person name="Watanabe A."/>
            <person name="Iriguchi M."/>
            <person name="Ishikawa A."/>
            <person name="Kawashima K."/>
            <person name="Kimura T."/>
            <person name="Kishida Y."/>
            <person name="Kohara M."/>
            <person name="Matsumoto M."/>
            <person name="Matsuno A."/>
            <person name="Muraki A."/>
            <person name="Nakazaki N."/>
            <person name="Shimpo S."/>
            <person name="Sugimoto M."/>
            <person name="Takazawa M."/>
            <person name="Yamada M."/>
            <person name="Yasuda M."/>
            <person name="Tabata S."/>
        </authorList>
    </citation>
    <scope>NUCLEOTIDE SEQUENCE [LARGE SCALE GENOMIC DNA]</scope>
    <source>
        <strain>PCC 7120 / SAG 25.82 / UTEX 2576</strain>
    </source>
</reference>
<protein>
    <recommendedName>
        <fullName>NAD(P)H-quinone oxidoreductase chain 4-3</fullName>
        <ecNumber>7.1.1.-</ecNumber>
    </recommendedName>
    <alternativeName>
        <fullName>NAD(P)H dehydrogenase I, subunit D-3</fullName>
    </alternativeName>
    <alternativeName>
        <fullName>NDH-1, chain 4-3</fullName>
    </alternativeName>
</protein>
<sequence length="560" mass="61013">MADGFPWLTAIILLPLVASAFIPLLPDKEGKLVRWYALGVGIADFVLMCYTFWHHYDTSSATFQLVEKYDWLPQIGFSWAVSVDGISMPLVLLAGFVTTLSMLAAWQVNLKPRLFYFLMLVLYSAQIGVFVAQDLLLFFIMWELELVPVYLLVSIWGGQKRRYAATKFLLYTAAASIFILIAGLAMALYGDNTTFDIVELGAKNYPLALELLLYAGLLIAFGVKLAIFPLHTWLPDAHGEASAPVSMILAGVLLKMGGYGLIRLNLELLPDAHIYFAPVLATLGVINIIYGGLNSFAQTHMKRRLAYSSVSHMGFVLLGIASFTDVGVSGAMLQMLSHGLIAAVLFFLAGVTYDRTHTMAMDNLGGIGQAMPKVFALFTAGTMASLALPGMSGFVSELKVFIGVTTSDIYSPTFCTVMVFLAAVGVILTPIYLLSMLRQVFYGTGAELSCNINNGAYQNQEDEGTACFGTDCLLPGEAVYRDASVREVFIAVSFLVLIIGVGVYPKIATQLYDVKTVAVNTQVRQSYTQIAQSNPQIYAKGFFTPQIVEPEVMAVSGVIK</sequence>
<comment type="function">
    <text evidence="1">NDH-1 shuttles electrons from NAD(P)H, via FMN and iron-sulfur (Fe-S) centers, to quinones in the respiratory chain. The immediate electron acceptor for the enzyme in this species is believed to be plastoquinone. Couples the redox reaction to proton translocation (for every two electrons transferred, four hydrogen ions are translocated across the cytoplasmic membrane), and thus conserves the redox energy in a proton gradient (By similarity).</text>
</comment>
<comment type="catalytic activity">
    <reaction>
        <text>a plastoquinone + NADH + (n+1) H(+)(in) = a plastoquinol + NAD(+) + n H(+)(out)</text>
        <dbReference type="Rhea" id="RHEA:42608"/>
        <dbReference type="Rhea" id="RHEA-COMP:9561"/>
        <dbReference type="Rhea" id="RHEA-COMP:9562"/>
        <dbReference type="ChEBI" id="CHEBI:15378"/>
        <dbReference type="ChEBI" id="CHEBI:17757"/>
        <dbReference type="ChEBI" id="CHEBI:57540"/>
        <dbReference type="ChEBI" id="CHEBI:57945"/>
        <dbReference type="ChEBI" id="CHEBI:62192"/>
    </reaction>
</comment>
<comment type="catalytic activity">
    <reaction>
        <text>a plastoquinone + NADPH + (n+1) H(+)(in) = a plastoquinol + NADP(+) + n H(+)(out)</text>
        <dbReference type="Rhea" id="RHEA:42612"/>
        <dbReference type="Rhea" id="RHEA-COMP:9561"/>
        <dbReference type="Rhea" id="RHEA-COMP:9562"/>
        <dbReference type="ChEBI" id="CHEBI:15378"/>
        <dbReference type="ChEBI" id="CHEBI:17757"/>
        <dbReference type="ChEBI" id="CHEBI:57783"/>
        <dbReference type="ChEBI" id="CHEBI:58349"/>
        <dbReference type="ChEBI" id="CHEBI:62192"/>
    </reaction>
</comment>
<comment type="subcellular location">
    <subcellularLocation>
        <location evidence="1">Cellular thylakoid membrane</location>
        <topology evidence="1">Multi-pass membrane protein</topology>
    </subcellularLocation>
</comment>
<comment type="similarity">
    <text evidence="3">Belongs to the complex I subunit 4 family.</text>
</comment>
<proteinExistence type="inferred from homology"/>
<organism>
    <name type="scientific">Nostoc sp. (strain PCC 7120 / SAG 25.82 / UTEX 2576)</name>
    <dbReference type="NCBI Taxonomy" id="103690"/>
    <lineage>
        <taxon>Bacteria</taxon>
        <taxon>Bacillati</taxon>
        <taxon>Cyanobacteriota</taxon>
        <taxon>Cyanophyceae</taxon>
        <taxon>Nostocales</taxon>
        <taxon>Nostocaceae</taxon>
        <taxon>Nostoc</taxon>
    </lineage>
</organism>
<name>NU4C3_NOSS1</name>